<sequence length="1377" mass="156321">MSGKPAARQGDMTQYGGSIVQGSAGVRIGAPTGVACSVCPGGVTSGHPVNPLLGAKVLPGETDIALPGPLPFILSRTYSSYRTKTPAPVGSLGPGWKMPADIRLQLRDNTLILSDNGGRSLYFEHLFPGEDGYSRSESLWLVRGGVAKLDEGHRLAALWQALPEELRLSPHRYLATNSPQGPWWLLGWCERVPEADEVLPAPLPPYRVLTGLVDRFGRTQTFHREAAGEFSGEITGVTDGAWRHFRLVLTTQAQRAEEARQQAISGGTEPSAFPDTLPGYTEYGRDNGIRLSAVWLTHDPEYPENLPAAPLVRYGWTPRGELAVVYDRSGKQVRSFTYDDKYRGRMVAHRHTGRPEIRYRYDSDGRVTEQLNPAGLSYTYQYEKDRITITDSLDRREVLHTQGEAGLKRVVKKEHADGSVTQSQFDAVGRLRAQTDAAGRTTEYSPDVVTGLITRITTPDGRASAFYYNHHNQLTSATGPDGLELRREYDELGRLIQETAPDGDITRYRYDNPHSDLPCATEDATGSRKTMTWSRYGQLLSFTDCSGYVTRYDHDRFGQMTAVHREEGLSQYRAYDSRGQLIAVKDTQGHETRYEYNIAGDLTAVIAPDGSRNGTQYDAWGKAVRTTQGGLTRSMEYDAAGRVIRLTSENGSHTTFRYDVLDRLIQETGFDGRTQRYHHDLTGKLIRSEDEGLVTHWHYDEADRLTHRTVKGETAERWQYDERGWLTDISHISEGHRVAVHYRYDEKGRLTGERQTVHHPQTEALLWQHETRHAYNAQGLANRCIPDSLPAVEWLTYGSGYLAGMKLGDTPLVEYTRDRLHRETLRSFGRYELTTAYTPAGQLQSQHLNSLLSDRDYTWNDNGELIRISSPRQTRSYSYSTTGRLTGVHTTAANLDIRIPYATDPAGNRLPDPELHPDSTLSMWPDNRIARDAHYLYRYDRHGRLTEKTDLIPEGVIRTDDERTHRYHYDSQHRLVHYTRTQYEEPLVESRYLYDPLGRRVAKRVWRRERDLTGWMSLSRKPQVTWYGWDGDRLTTIQNDRTRIQTIYQPGSFTPLIRVETATGELAKTQRRSLADALQQSGGEDGGSVVFPPVLVQMLDRLESEILADRVSEESRRWLASCGLTVEQMQNQMDPVYTPARKIHLYHCDHRGLPLALISKEGTTEWCAEYDEWGNLLNEENPHQLQQLIRLPGQQYDEESGLYYNRHRYYDPLQGRYITQDPIGLKGGWNFYQYPLNPVTNTDPLGLEVFPRPFPLPIPWPKSPAQQQADDNAAKALTKWWNDTASQRIFDSLILNNPGLALDITMIASRGNVADTGITDRVNDIINDRFWSDGKKPDRCDVLQELIDCGDISAKDAKSTQKAWNCRHSRQSNDKKR</sequence>
<accession>P16916</accession>
<accession>Q2M7Q6</accession>
<reference key="1">
    <citation type="journal article" date="1990" name="J. Bacteriol.">
        <title>Structure of the rhsA locus from Escherichia coli K-12 and comparison of rhsA with other members of the rhs multigene family.</title>
        <authorList>
            <person name="Feulner G."/>
            <person name="Gray J.A."/>
            <person name="Kirschman J.A."/>
            <person name="Lehner A.F."/>
            <person name="Sadosky A.B."/>
            <person name="Vlazny D.A."/>
            <person name="Zhang J."/>
            <person name="Zhao S."/>
            <person name="Hill C.W."/>
        </authorList>
    </citation>
    <scope>NUCLEOTIDE SEQUENCE [GENOMIC DNA]</scope>
    <source>
        <strain>K12</strain>
    </source>
</reference>
<reference key="2">
    <citation type="journal article" date="1994" name="Nucleic Acids Res.">
        <title>Analysis of the Escherichia coli genome. V. DNA sequence of the region from 76.0 to 81.5 minutes.</title>
        <authorList>
            <person name="Sofia H.J."/>
            <person name="Burland V."/>
            <person name="Daniels D.L."/>
            <person name="Plunkett G. III"/>
            <person name="Blattner F.R."/>
        </authorList>
    </citation>
    <scope>NUCLEOTIDE SEQUENCE [LARGE SCALE GENOMIC DNA]</scope>
    <source>
        <strain>K12 / MG1655 / ATCC 47076</strain>
    </source>
</reference>
<reference key="3">
    <citation type="journal article" date="1997" name="Science">
        <title>The complete genome sequence of Escherichia coli K-12.</title>
        <authorList>
            <person name="Blattner F.R."/>
            <person name="Plunkett G. III"/>
            <person name="Bloch C.A."/>
            <person name="Perna N.T."/>
            <person name="Burland V."/>
            <person name="Riley M."/>
            <person name="Collado-Vides J."/>
            <person name="Glasner J.D."/>
            <person name="Rode C.K."/>
            <person name="Mayhew G.F."/>
            <person name="Gregor J."/>
            <person name="Davis N.W."/>
            <person name="Kirkpatrick H.A."/>
            <person name="Goeden M.A."/>
            <person name="Rose D.J."/>
            <person name="Mau B."/>
            <person name="Shao Y."/>
        </authorList>
    </citation>
    <scope>NUCLEOTIDE SEQUENCE [LARGE SCALE GENOMIC DNA]</scope>
    <source>
        <strain>K12 / MG1655 / ATCC 47076</strain>
    </source>
</reference>
<reference key="4">
    <citation type="journal article" date="2006" name="Mol. Syst. Biol.">
        <title>Highly accurate genome sequences of Escherichia coli K-12 strains MG1655 and W3110.</title>
        <authorList>
            <person name="Hayashi K."/>
            <person name="Morooka N."/>
            <person name="Yamamoto Y."/>
            <person name="Fujita K."/>
            <person name="Isono K."/>
            <person name="Choi S."/>
            <person name="Ohtsubo E."/>
            <person name="Baba T."/>
            <person name="Wanner B.L."/>
            <person name="Mori H."/>
            <person name="Horiuchi T."/>
        </authorList>
    </citation>
    <scope>NUCLEOTIDE SEQUENCE [LARGE SCALE GENOMIC DNA]</scope>
    <source>
        <strain>K12 / W3110 / ATCC 27325 / DSM 5911</strain>
    </source>
</reference>
<reference key="5">
    <citation type="journal article" date="1994" name="Mol. Microbiol.">
        <title>Rhs elements of Escherichia coli: a family of genetic composites each encoding a large mosaic protein.</title>
        <authorList>
            <person name="Hill C.W."/>
            <person name="Sandt C.H."/>
            <person name="Vlazny D.A."/>
        </authorList>
    </citation>
    <scope>REVIEW</scope>
</reference>
<evidence type="ECO:0000256" key="1">
    <source>
        <dbReference type="SAM" id="MobiDB-lite"/>
    </source>
</evidence>
<evidence type="ECO:0000305" key="2"/>
<evidence type="ECO:0000305" key="3">
    <source>
    </source>
</evidence>
<name>RHSA_ECOLI</name>
<gene>
    <name type="primary">rhsA</name>
    <name type="ordered locus">b3593</name>
    <name type="ordered locus">JW3566</name>
</gene>
<organism>
    <name type="scientific">Escherichia coli (strain K12)</name>
    <dbReference type="NCBI Taxonomy" id="83333"/>
    <lineage>
        <taxon>Bacteria</taxon>
        <taxon>Pseudomonadati</taxon>
        <taxon>Pseudomonadota</taxon>
        <taxon>Gammaproteobacteria</taxon>
        <taxon>Enterobacterales</taxon>
        <taxon>Enterobacteriaceae</taxon>
        <taxon>Escherichia</taxon>
    </lineage>
</organism>
<feature type="chain" id="PRO_0000022225" description="Protein RhsA">
    <location>
        <begin position="1"/>
        <end position="1377"/>
    </location>
</feature>
<feature type="repeat" description="1" evidence="3">
    <location>
        <begin position="330"/>
        <end position="352"/>
    </location>
</feature>
<feature type="repeat" description="2" evidence="3">
    <location>
        <begin position="353"/>
        <end position="374"/>
    </location>
</feature>
<feature type="repeat" description="3" evidence="3">
    <location>
        <begin position="375"/>
        <end position="417"/>
    </location>
</feature>
<feature type="repeat" description="4" evidence="3">
    <location>
        <begin position="418"/>
        <end position="438"/>
    </location>
</feature>
<feature type="repeat" description="5" evidence="3">
    <location>
        <begin position="439"/>
        <end position="460"/>
    </location>
</feature>
<feature type="repeat" description="6" evidence="3">
    <location>
        <begin position="461"/>
        <end position="481"/>
    </location>
</feature>
<feature type="repeat" description="7" evidence="3">
    <location>
        <begin position="482"/>
        <end position="502"/>
    </location>
</feature>
<feature type="repeat" description="8" evidence="3">
    <location>
        <begin position="503"/>
        <end position="525"/>
    </location>
</feature>
<feature type="repeat" description="9" evidence="3">
    <location>
        <begin position="526"/>
        <end position="546"/>
    </location>
</feature>
<feature type="repeat" description="10" evidence="3">
    <location>
        <begin position="547"/>
        <end position="567"/>
    </location>
</feature>
<feature type="repeat" description="11" evidence="3">
    <location>
        <begin position="568"/>
        <end position="588"/>
    </location>
</feature>
<feature type="repeat" description="12" evidence="3">
    <location>
        <begin position="589"/>
        <end position="609"/>
    </location>
</feature>
<feature type="repeat" description="13" evidence="3">
    <location>
        <begin position="610"/>
        <end position="629"/>
    </location>
</feature>
<feature type="repeat" description="14" evidence="3">
    <location>
        <begin position="630"/>
        <end position="650"/>
    </location>
</feature>
<feature type="repeat" description="15" evidence="3">
    <location>
        <begin position="651"/>
        <end position="671"/>
    </location>
</feature>
<feature type="repeat" description="16" evidence="3">
    <location>
        <begin position="672"/>
        <end position="691"/>
    </location>
</feature>
<feature type="repeat" description="17" evidence="3">
    <location>
        <begin position="692"/>
        <end position="711"/>
    </location>
</feature>
<feature type="repeat" description="18" evidence="3">
    <location>
        <begin position="712"/>
        <end position="734"/>
    </location>
</feature>
<feature type="repeat" description="19" evidence="3">
    <location>
        <begin position="735"/>
        <end position="758"/>
    </location>
</feature>
<feature type="repeat" description="20" evidence="3">
    <location>
        <begin position="808"/>
        <end position="828"/>
    </location>
</feature>
<feature type="repeat" description="21" evidence="3">
    <location>
        <begin position="829"/>
        <end position="850"/>
    </location>
</feature>
<feature type="repeat" description="22" evidence="3">
    <location>
        <begin position="851"/>
        <end position="871"/>
    </location>
</feature>
<feature type="repeat" description="23" evidence="3">
    <location>
        <begin position="872"/>
        <end position="894"/>
    </location>
</feature>
<feature type="repeat" description="24" evidence="3">
    <location>
        <begin position="895"/>
        <end position="930"/>
    </location>
</feature>
<feature type="repeat" description="25" evidence="3">
    <location>
        <begin position="931"/>
        <end position="959"/>
    </location>
</feature>
<feature type="repeat" description="26" evidence="3">
    <location>
        <begin position="960"/>
        <end position="984"/>
    </location>
</feature>
<feature type="repeat" description="27" evidence="3">
    <location>
        <begin position="985"/>
        <end position="1019"/>
    </location>
</feature>
<feature type="repeat" description="28" evidence="3">
    <location>
        <begin position="1162"/>
        <end position="1186"/>
    </location>
</feature>
<feature type="region of interest" description="28 X approximate tandem repeats" evidence="3">
    <location>
        <begin position="330"/>
        <end position="1186"/>
    </location>
</feature>
<feature type="region of interest" description="Disordered" evidence="1">
    <location>
        <begin position="1356"/>
        <end position="1377"/>
    </location>
</feature>
<protein>
    <recommendedName>
        <fullName>Protein RhsA</fullName>
    </recommendedName>
</protein>
<keyword id="KW-1185">Reference proteome</keyword>
<keyword id="KW-0677">Repeat</keyword>
<comment type="function">
    <text>Rhs elements have a nonessential function. They may play an important role in the natural ecology of the cell.</text>
</comment>
<comment type="domain">
    <text>Each rhs appears to consist of a highly conserved 141 kDa amino fragment followed by a highly divergent C-terminus.</text>
</comment>
<comment type="similarity">
    <text evidence="2">Belongs to the RHS family.</text>
</comment>
<dbReference type="EMBL" id="L19044">
    <property type="protein sequence ID" value="AAC95065.1"/>
    <property type="molecule type" value="Genomic_DNA"/>
</dbReference>
<dbReference type="EMBL" id="U00039">
    <property type="protein sequence ID" value="AAB18570.1"/>
    <property type="molecule type" value="Genomic_DNA"/>
</dbReference>
<dbReference type="EMBL" id="U00096">
    <property type="protein sequence ID" value="AAC76617.1"/>
    <property type="molecule type" value="Genomic_DNA"/>
</dbReference>
<dbReference type="EMBL" id="AP009048">
    <property type="protein sequence ID" value="BAE77700.1"/>
    <property type="molecule type" value="Genomic_DNA"/>
</dbReference>
<dbReference type="PIR" id="C65159">
    <property type="entry name" value="C65159"/>
</dbReference>
<dbReference type="RefSeq" id="NP_418050.1">
    <property type="nucleotide sequence ID" value="NC_000913.3"/>
</dbReference>
<dbReference type="RefSeq" id="WP_000015300.1">
    <property type="nucleotide sequence ID" value="NZ_LN832404.1"/>
</dbReference>
<dbReference type="SMR" id="P16916"/>
<dbReference type="BioGRID" id="4262562">
    <property type="interactions" value="165"/>
</dbReference>
<dbReference type="DIP" id="DIP-10699N"/>
<dbReference type="FunCoup" id="P16916">
    <property type="interactions" value="211"/>
</dbReference>
<dbReference type="IntAct" id="P16916">
    <property type="interactions" value="27"/>
</dbReference>
<dbReference type="STRING" id="511145.b3593"/>
<dbReference type="PaxDb" id="511145-b3593"/>
<dbReference type="EnsemblBacteria" id="AAC76617">
    <property type="protein sequence ID" value="AAC76617"/>
    <property type="gene ID" value="b3593"/>
</dbReference>
<dbReference type="GeneID" id="948120"/>
<dbReference type="KEGG" id="ecj:JW3566"/>
<dbReference type="KEGG" id="eco:b3593"/>
<dbReference type="KEGG" id="ecoc:C3026_19480"/>
<dbReference type="PATRIC" id="fig|511145.12.peg.3710"/>
<dbReference type="EchoBASE" id="EB0839"/>
<dbReference type="eggNOG" id="COG3209">
    <property type="taxonomic scope" value="Bacteria"/>
</dbReference>
<dbReference type="HOGENOM" id="CLU_001218_0_1_6"/>
<dbReference type="InParanoid" id="P16916"/>
<dbReference type="OMA" id="ATHQKYY"/>
<dbReference type="OrthoDB" id="6043530at2"/>
<dbReference type="PhylomeDB" id="P16916"/>
<dbReference type="BioCyc" id="EcoCyc:EG10846-MONOMER"/>
<dbReference type="PRO" id="PR:P16916"/>
<dbReference type="Proteomes" id="UP000000625">
    <property type="component" value="Chromosome"/>
</dbReference>
<dbReference type="Gene3D" id="3.90.930.1">
    <property type="match status" value="1"/>
</dbReference>
<dbReference type="Gene3D" id="2.180.10.10">
    <property type="entry name" value="RHS repeat-associated core"/>
    <property type="match status" value="2"/>
</dbReference>
<dbReference type="InterPro" id="IPR045351">
    <property type="entry name" value="DUF6531"/>
</dbReference>
<dbReference type="InterPro" id="IPR028947">
    <property type="entry name" value="Ntox34"/>
</dbReference>
<dbReference type="InterPro" id="IPR001826">
    <property type="entry name" value="RHS"/>
</dbReference>
<dbReference type="InterPro" id="IPR022385">
    <property type="entry name" value="Rhs_assc_core"/>
</dbReference>
<dbReference type="InterPro" id="IPR053422">
    <property type="entry name" value="RHS_domain"/>
</dbReference>
<dbReference type="InterPro" id="IPR031325">
    <property type="entry name" value="RHS_repeat"/>
</dbReference>
<dbReference type="InterPro" id="IPR050708">
    <property type="entry name" value="T6SS_VgrG/RHS"/>
</dbReference>
<dbReference type="InterPro" id="IPR006530">
    <property type="entry name" value="YD"/>
</dbReference>
<dbReference type="NCBIfam" id="TIGR03696">
    <property type="entry name" value="Rhs_assc_core"/>
    <property type="match status" value="1"/>
</dbReference>
<dbReference type="NCBIfam" id="NF041261">
    <property type="entry name" value="RHS_core"/>
    <property type="match status" value="1"/>
</dbReference>
<dbReference type="NCBIfam" id="TIGR01643">
    <property type="entry name" value="YD_repeat_2x"/>
    <property type="match status" value="5"/>
</dbReference>
<dbReference type="PANTHER" id="PTHR32305">
    <property type="match status" value="1"/>
</dbReference>
<dbReference type="PANTHER" id="PTHR32305:SF15">
    <property type="entry name" value="PROTEIN RHSA-RELATED"/>
    <property type="match status" value="1"/>
</dbReference>
<dbReference type="Pfam" id="PF20148">
    <property type="entry name" value="DUF6531"/>
    <property type="match status" value="1"/>
</dbReference>
<dbReference type="Pfam" id="PF15606">
    <property type="entry name" value="Ntox34"/>
    <property type="match status" value="1"/>
</dbReference>
<dbReference type="Pfam" id="PF03527">
    <property type="entry name" value="RHS"/>
    <property type="match status" value="1"/>
</dbReference>
<dbReference type="Pfam" id="PF05593">
    <property type="entry name" value="RHS_repeat"/>
    <property type="match status" value="6"/>
</dbReference>
<dbReference type="PRINTS" id="PR00394">
    <property type="entry name" value="RHSPROTEIN"/>
</dbReference>
<proteinExistence type="inferred from homology"/>